<comment type="function">
    <text evidence="1 3 4 5 6 7 8 9">Probable component of the anaphase promoting complex/cyclosome (APC/C), a cell cycle-regulated E3 ubiquitin ligase that controls progression through mitosis and the G1 phase of the cell cycle (By similarity). The APC/C complex acts by mediating ubiquitination and subsequent degradation of target proteins (By similarity). Developmental role in early embryogenesis and the metaphase to anaphase transition in oocyte and spermatocyte meiosis and mitosis in somatic and germ cells (PubMed:10749938, PubMed:11134076, PubMed:12498686, PubMed:17237515). Required for embryonic anterior-posterior axis formation (PubMed:11832245). Negatively regulates ify-1 protein levels during meiosis I (PubMed:12498686). Plays a role in regulating the abundance of glr-1 receptors in postmitotic neurons, which may in turn control animal locomotion (PubMed:15556870). Involved in regulating GABA neurotransmitter release at neuromuscular junctions in GABA motor neurons (PubMed:24321454).</text>
</comment>
<comment type="pathway">
    <text evidence="10">Protein modification; protein ubiquitination.</text>
</comment>
<comment type="subunit">
    <text evidence="10">The APC/C is probably composed of at least 12 subunits: apc-2, apc-10, apc-11, cdc-26, emb-1, emb-27, emb-30, mat-1, mat-2, mat-3, such-1 and gfi-3.</text>
</comment>
<comment type="interaction">
    <interactant intactId="EBI-311903">
        <id>P34441</id>
    </interactant>
    <interactant intactId="EBI-311911">
        <id>P34766</id>
        <label>pal-1</label>
    </interactant>
    <organismsDiffer>false</organismsDiffer>
    <experiments>2</experiments>
</comment>
<comment type="domain">
    <text>The C-terminus is specifically required for completion of oocyte meiotic divisions.</text>
</comment>
<comment type="similarity">
    <text evidence="10">Belongs to the APC4 family.</text>
</comment>
<reference key="1">
    <citation type="journal article" date="2000" name="Mol. Biol. Cell">
        <title>EMB-30: an APC4 homologue required for metaphase-to-anaphase transitions during meiosis and mitosis in Caenorhabditis elegans.</title>
        <authorList>
            <person name="Furuta T."/>
            <person name="Tuck S."/>
            <person name="Kirchner J."/>
            <person name="Koch B."/>
            <person name="Auty R."/>
            <person name="Kitagawa R."/>
            <person name="Rose A.M."/>
            <person name="Greenstein D."/>
        </authorList>
    </citation>
    <scope>NUCLEOTIDE SEQUENCE [MRNA]</scope>
    <scope>FUNCTION</scope>
    <scope>MUTAGENESIS OF LEU-46; ALA-223; GLY-224; GLU-360; GLU-483; LEU-564 AND GLY-701</scope>
    <source>
        <strain>Bristol N2</strain>
    </source>
</reference>
<reference key="2">
    <citation type="journal article" date="1994" name="Nature">
        <title>2.2 Mb of contiguous nucleotide sequence from chromosome III of C. elegans.</title>
        <authorList>
            <person name="Wilson R."/>
            <person name="Ainscough R."/>
            <person name="Anderson K."/>
            <person name="Baynes C."/>
            <person name="Berks M."/>
            <person name="Bonfield J."/>
            <person name="Burton J."/>
            <person name="Connell M."/>
            <person name="Copsey T."/>
            <person name="Cooper J."/>
            <person name="Coulson A."/>
            <person name="Craxton M."/>
            <person name="Dear S."/>
            <person name="Du Z."/>
            <person name="Durbin R."/>
            <person name="Favello A."/>
            <person name="Fraser A."/>
            <person name="Fulton L."/>
            <person name="Gardner A."/>
            <person name="Green P."/>
            <person name="Hawkins T."/>
            <person name="Hillier L."/>
            <person name="Jier M."/>
            <person name="Johnston L."/>
            <person name="Jones M."/>
            <person name="Kershaw J."/>
            <person name="Kirsten J."/>
            <person name="Laisster N."/>
            <person name="Latreille P."/>
            <person name="Lightning J."/>
            <person name="Lloyd C."/>
            <person name="Mortimore B."/>
            <person name="O'Callaghan M."/>
            <person name="Parsons J."/>
            <person name="Percy C."/>
            <person name="Rifken L."/>
            <person name="Roopra A."/>
            <person name="Saunders D."/>
            <person name="Shownkeen R."/>
            <person name="Sims M."/>
            <person name="Smaldon N."/>
            <person name="Smith A."/>
            <person name="Smith M."/>
            <person name="Sonnhammer E."/>
            <person name="Staden R."/>
            <person name="Sulston J."/>
            <person name="Thierry-Mieg J."/>
            <person name="Thomas K."/>
            <person name="Vaudin M."/>
            <person name="Vaughan K."/>
            <person name="Waterston R."/>
            <person name="Watson A."/>
            <person name="Weinstock L."/>
            <person name="Wilkinson-Sproat J."/>
            <person name="Wohldman P."/>
        </authorList>
    </citation>
    <scope>NUCLEOTIDE SEQUENCE [LARGE SCALE GENOMIC DNA]</scope>
    <source>
        <strain>Bristol N2</strain>
    </source>
</reference>
<reference key="3">
    <citation type="journal article" date="1998" name="Science">
        <title>Genome sequence of the nematode C. elegans: a platform for investigating biology.</title>
        <authorList>
            <consortium name="The C. elegans sequencing consortium"/>
        </authorList>
    </citation>
    <scope>NUCLEOTIDE SEQUENCE [LARGE SCALE GENOMIC DNA]</scope>
    <source>
        <strain>Bristol N2</strain>
    </source>
</reference>
<reference key="4">
    <citation type="journal article" date="2000" name="J. Cell Biol.">
        <title>Metaphase to anaphase (mat) transition-defective mutants in Caenorhabditis elegans.</title>
        <authorList>
            <person name="Golden A."/>
            <person name="Sadler P.L."/>
            <person name="Wallenfang M.R."/>
            <person name="Schumacher J.M."/>
            <person name="Hamill D.R."/>
            <person name="Bates G."/>
            <person name="Bowerman B."/>
            <person name="Seydoux G."/>
            <person name="Shakes D.C."/>
        </authorList>
    </citation>
    <scope>FUNCTION</scope>
</reference>
<reference key="5">
    <citation type="journal article" date="2002" name="Curr. Biol.">
        <title>The Cdc20 homolog, FZY-1, and its interacting protein, IFY-1, are required for proper chromosome segregation in Caenorhabditis elegans.</title>
        <authorList>
            <person name="Kitagawa R."/>
            <person name="Law E."/>
            <person name="Tang L."/>
            <person name="Rose A.M."/>
        </authorList>
    </citation>
    <scope>FUNCTION</scope>
</reference>
<reference key="6">
    <citation type="journal article" date="2002" name="Dev. Cell">
        <title>The anaphase-promoting complex and separin are required for embryonic anterior-posterior axis formation.</title>
        <authorList>
            <person name="Rappleye C.A."/>
            <person name="Tagawa A."/>
            <person name="Lyczak R."/>
            <person name="Bowerman B."/>
            <person name="Aroian R.V."/>
        </authorList>
    </citation>
    <scope>FUNCTION</scope>
</reference>
<reference key="7">
    <citation type="journal article" date="2004" name="Curr. Biol.">
        <title>The anaphase-promoting complex regulates the abundance of GLR-1 glutamate receptors in the ventral nerve cord of C. elegans.</title>
        <authorList>
            <person name="Juo P."/>
            <person name="Kaplan J.M."/>
        </authorList>
    </citation>
    <scope>FUNCTION</scope>
</reference>
<reference key="8">
    <citation type="journal article" date="2007" name="Genetics">
        <title>Suppressors of spindle checkpoint defect (such) mutants identify new mdf-1/MAD1 interactors in Caenorhabditis elegans.</title>
        <authorList>
            <person name="Tarailo M."/>
            <person name="Kitagawa R."/>
            <person name="Rose A.M."/>
        </authorList>
    </citation>
    <scope>FUNCTION</scope>
    <scope>MUTAGENESIS OF THR-265 AND MET-480</scope>
</reference>
<reference key="9">
    <citation type="journal article" date="2014" name="Mol. Cell. Neurosci.">
        <title>The anaphase-promoting complex (APC) ubiquitin ligase regulates GABA transmission at the C. elegans neuromuscular junction.</title>
        <authorList>
            <person name="Kowalski J.R."/>
            <person name="Dube H."/>
            <person name="Touroutine D."/>
            <person name="Rush K.M."/>
            <person name="Goodwin P.R."/>
            <person name="Carozza M."/>
            <person name="Didier Z."/>
            <person name="Francis M.M."/>
            <person name="Juo P."/>
        </authorList>
    </citation>
    <scope>FUNCTION</scope>
</reference>
<evidence type="ECO:0000250" key="1">
    <source>
        <dbReference type="UniProtKB" id="Q9UJX5"/>
    </source>
</evidence>
<evidence type="ECO:0000256" key="2">
    <source>
        <dbReference type="SAM" id="MobiDB-lite"/>
    </source>
</evidence>
<evidence type="ECO:0000269" key="3">
    <source>
    </source>
</evidence>
<evidence type="ECO:0000269" key="4">
    <source>
    </source>
</evidence>
<evidence type="ECO:0000269" key="5">
    <source>
    </source>
</evidence>
<evidence type="ECO:0000269" key="6">
    <source>
    </source>
</evidence>
<evidence type="ECO:0000269" key="7">
    <source>
    </source>
</evidence>
<evidence type="ECO:0000269" key="8">
    <source>
    </source>
</evidence>
<evidence type="ECO:0000269" key="9">
    <source>
    </source>
</evidence>
<evidence type="ECO:0000305" key="10"/>
<evidence type="ECO:0000312" key="11">
    <source>
        <dbReference type="WormBase" id="F54C8.3"/>
    </source>
</evidence>
<keyword id="KW-0131">Cell cycle</keyword>
<keyword id="KW-0132">Cell division</keyword>
<keyword id="KW-0217">Developmental protein</keyword>
<keyword id="KW-0469">Meiosis</keyword>
<keyword id="KW-0498">Mitosis</keyword>
<keyword id="KW-0532">Neurotransmitter transport</keyword>
<keyword id="KW-1185">Reference proteome</keyword>
<keyword id="KW-0677">Repeat</keyword>
<keyword id="KW-0813">Transport</keyword>
<keyword id="KW-0833">Ubl conjugation pathway</keyword>
<keyword id="KW-0853">WD repeat</keyword>
<feature type="chain" id="PRO_0000050959" description="Abnormal embryogenesis protein 30" evidence="10">
    <location>
        <begin position="1"/>
        <end position="1027"/>
    </location>
</feature>
<feature type="repeat" description="WD 1">
    <location>
        <begin position="18"/>
        <end position="65"/>
    </location>
</feature>
<feature type="repeat" description="WD 2">
    <location>
        <begin position="70"/>
        <end position="109"/>
    </location>
</feature>
<feature type="region of interest" description="Disordered" evidence="2">
    <location>
        <begin position="619"/>
        <end position="655"/>
    </location>
</feature>
<feature type="region of interest" description="Disordered" evidence="2">
    <location>
        <begin position="1005"/>
        <end position="1027"/>
    </location>
</feature>
<feature type="compositionally biased region" description="Acidic residues" evidence="2">
    <location>
        <begin position="625"/>
        <end position="647"/>
    </location>
</feature>
<feature type="compositionally biased region" description="Acidic residues" evidence="2">
    <location>
        <begin position="1014"/>
        <end position="1027"/>
    </location>
</feature>
<feature type="mutagenesis site" description="In TN481." evidence="3">
    <original>L</original>
    <variation>W</variation>
    <location>
        <position position="46"/>
    </location>
</feature>
<feature type="mutagenesis site" description="In TN478." evidence="3">
    <original>A</original>
    <variation>V</variation>
    <location>
        <position position="223"/>
    </location>
</feature>
<feature type="mutagenesis site" description="In TN479." evidence="3">
    <original>G</original>
    <variation>D</variation>
    <location>
        <position position="224"/>
    </location>
</feature>
<feature type="mutagenesis site" description="In h1962ts; temperature sensitive mutant that can be maintained at 20 degrees Celsius, but that results in the production of unfertilized eggs and therefore sterility at 25 degrees Celsius." evidence="8">
    <original>T</original>
    <variation>I</variation>
    <location>
        <position position="265"/>
    </location>
</feature>
<feature type="mutagenesis site" description="In G53." evidence="3">
    <original>E</original>
    <variation>K</variation>
    <location>
        <position position="360"/>
    </location>
</feature>
<feature type="mutagenesis site" description="In h1959ts; temperature sensitive mutant that can be maintained at 20 degrees Celsius, but that results in embryonic lethality at 25 degrees Celsius." evidence="8">
    <original>M</original>
    <variation>I</variation>
    <location>
        <position position="480"/>
    </location>
</feature>
<feature type="mutagenesis site" description="In AX69." evidence="3">
    <original>E</original>
    <variation>K</variation>
    <location>
        <position position="483"/>
    </location>
</feature>
<feature type="mutagenesis site" description="In TN494." evidence="3">
    <original>L</original>
    <variation>P</variation>
    <location>
        <position position="564"/>
    </location>
</feature>
<feature type="mutagenesis site" description="In TN377." evidence="3">
    <original>G</original>
    <variation>R</variation>
    <location>
        <position position="701"/>
    </location>
</feature>
<name>EMB30_CAEEL</name>
<accession>P34441</accession>
<accession>Q9U4A4</accession>
<proteinExistence type="evidence at protein level"/>
<dbReference type="EMBL" id="AF192400">
    <property type="protein sequence ID" value="AAF24233.1"/>
    <property type="molecule type" value="mRNA"/>
</dbReference>
<dbReference type="EMBL" id="Z22178">
    <property type="protein sequence ID" value="CAA80159.3"/>
    <property type="molecule type" value="Genomic_DNA"/>
</dbReference>
<dbReference type="PIR" id="G88554">
    <property type="entry name" value="G88554"/>
</dbReference>
<dbReference type="PIR" id="S40745">
    <property type="entry name" value="S40745"/>
</dbReference>
<dbReference type="RefSeq" id="NP_499074.2">
    <property type="nucleotide sequence ID" value="NM_066673.6"/>
</dbReference>
<dbReference type="SMR" id="P34441"/>
<dbReference type="BioGRID" id="41519">
    <property type="interactions" value="18"/>
</dbReference>
<dbReference type="ComplexPortal" id="CPX-3382">
    <property type="entry name" value="Anaphase-promoting complex"/>
</dbReference>
<dbReference type="FunCoup" id="P34441">
    <property type="interactions" value="16"/>
</dbReference>
<dbReference type="IntAct" id="P34441">
    <property type="interactions" value="3"/>
</dbReference>
<dbReference type="STRING" id="6239.F54C8.3.2"/>
<dbReference type="PaxDb" id="6239-F54C8.3"/>
<dbReference type="PeptideAtlas" id="P34441"/>
<dbReference type="EnsemblMetazoa" id="F54C8.3.1">
    <property type="protein sequence ID" value="F54C8.3.1"/>
    <property type="gene ID" value="WBGene00001284"/>
</dbReference>
<dbReference type="GeneID" id="176322"/>
<dbReference type="KEGG" id="cel:CELE_F54C8.3"/>
<dbReference type="UCSC" id="F54C8.3">
    <property type="organism name" value="c. elegans"/>
</dbReference>
<dbReference type="AGR" id="WB:WBGene00001284"/>
<dbReference type="CTD" id="176322"/>
<dbReference type="WormBase" id="F54C8.3">
    <property type="protein sequence ID" value="CE32676"/>
    <property type="gene ID" value="WBGene00001284"/>
    <property type="gene designation" value="emb-30"/>
</dbReference>
<dbReference type="eggNOG" id="ENOG502SDZW">
    <property type="taxonomic scope" value="Eukaryota"/>
</dbReference>
<dbReference type="HOGENOM" id="CLU_004796_0_0_1"/>
<dbReference type="InParanoid" id="P34441"/>
<dbReference type="OMA" id="MMQELGH"/>
<dbReference type="OrthoDB" id="47802at2759"/>
<dbReference type="Reactome" id="R-CEL-983168">
    <property type="pathway name" value="Antigen processing: Ubiquitination &amp; Proteasome degradation"/>
</dbReference>
<dbReference type="SignaLink" id="P34441"/>
<dbReference type="UniPathway" id="UPA00143"/>
<dbReference type="PRO" id="PR:P34441"/>
<dbReference type="Proteomes" id="UP000001940">
    <property type="component" value="Chromosome III"/>
</dbReference>
<dbReference type="Bgee" id="WBGene00001284">
    <property type="expression patterns" value="Expressed in germ line (C elegans) and 4 other cell types or tissues"/>
</dbReference>
<dbReference type="GO" id="GO:0005680">
    <property type="term" value="C:anaphase-promoting complex"/>
    <property type="evidence" value="ECO:0000318"/>
    <property type="project" value="GO_Central"/>
</dbReference>
<dbReference type="GO" id="GO:0034399">
    <property type="term" value="C:nuclear periphery"/>
    <property type="evidence" value="ECO:0000318"/>
    <property type="project" value="GO_Central"/>
</dbReference>
<dbReference type="GO" id="GO:0031145">
    <property type="term" value="P:anaphase-promoting complex-dependent catabolic process"/>
    <property type="evidence" value="ECO:0000318"/>
    <property type="project" value="GO_Central"/>
</dbReference>
<dbReference type="GO" id="GO:0008595">
    <property type="term" value="P:anterior/posterior axis specification, embryo"/>
    <property type="evidence" value="ECO:0000315"/>
    <property type="project" value="WormBase"/>
</dbReference>
<dbReference type="GO" id="GO:0008356">
    <property type="term" value="P:asymmetric cell division"/>
    <property type="evidence" value="ECO:0000315"/>
    <property type="project" value="UniProtKB"/>
</dbReference>
<dbReference type="GO" id="GO:1990949">
    <property type="term" value="P:metaphase/anaphase transition of meiosis I"/>
    <property type="evidence" value="ECO:0000315"/>
    <property type="project" value="UniProtKB"/>
</dbReference>
<dbReference type="GO" id="GO:0010629">
    <property type="term" value="P:negative regulation of gene expression"/>
    <property type="evidence" value="ECO:0000315"/>
    <property type="project" value="UniProtKB"/>
</dbReference>
<dbReference type="GO" id="GO:0006836">
    <property type="term" value="P:neurotransmitter transport"/>
    <property type="evidence" value="ECO:0007669"/>
    <property type="project" value="UniProtKB-KW"/>
</dbReference>
<dbReference type="GO" id="GO:0009949">
    <property type="term" value="P:polarity specification of anterior/posterior axis"/>
    <property type="evidence" value="ECO:0000315"/>
    <property type="project" value="UniProtKB"/>
</dbReference>
<dbReference type="GO" id="GO:0070979">
    <property type="term" value="P:protein K11-linked ubiquitination"/>
    <property type="evidence" value="ECO:0000318"/>
    <property type="project" value="GO_Central"/>
</dbReference>
<dbReference type="GO" id="GO:0051445">
    <property type="term" value="P:regulation of meiotic cell cycle"/>
    <property type="evidence" value="ECO:0000303"/>
    <property type="project" value="ComplexPortal"/>
</dbReference>
<dbReference type="GO" id="GO:0007346">
    <property type="term" value="P:regulation of mitotic cell cycle"/>
    <property type="evidence" value="ECO:0000303"/>
    <property type="project" value="ComplexPortal"/>
</dbReference>
<dbReference type="Gene3D" id="2.130.10.10">
    <property type="entry name" value="YVTN repeat-like/Quinoprotein amine dehydrogenase"/>
    <property type="match status" value="1"/>
</dbReference>
<dbReference type="InterPro" id="IPR024789">
    <property type="entry name" value="APC4"/>
</dbReference>
<dbReference type="InterPro" id="IPR024977">
    <property type="entry name" value="Apc4-like_WD40_dom"/>
</dbReference>
<dbReference type="InterPro" id="IPR015943">
    <property type="entry name" value="WD40/YVTN_repeat-like_dom_sf"/>
</dbReference>
<dbReference type="InterPro" id="IPR036322">
    <property type="entry name" value="WD40_repeat_dom_sf"/>
</dbReference>
<dbReference type="PANTHER" id="PTHR13260">
    <property type="entry name" value="ANAPHASE PROMOTING COMPLEX SUBUNIT 4 APC4"/>
    <property type="match status" value="1"/>
</dbReference>
<dbReference type="PANTHER" id="PTHR13260:SF0">
    <property type="entry name" value="ANAPHASE-PROMOTING COMPLEX SUBUNIT 4"/>
    <property type="match status" value="1"/>
</dbReference>
<dbReference type="Pfam" id="PF12894">
    <property type="entry name" value="ANAPC4_WD40"/>
    <property type="match status" value="1"/>
</dbReference>
<dbReference type="SUPFAM" id="SSF50978">
    <property type="entry name" value="WD40 repeat-like"/>
    <property type="match status" value="1"/>
</dbReference>
<gene>
    <name evidence="11" type="primary">emb-30</name>
    <name evidence="11" type="ORF">F54C8.3</name>
</gene>
<sequence>MDFSIVKTQILNNRRTFRTPFKVSSMCFSSQNDLIALGSKTGEILLKRTSWKMIWKTNINMIQAVGTECKLDSSVSALHFSPDGRFLAAATSKGIIHLLDVETGKVRFSVKAASEKIAKLHWNCVREKPFISNLGEFTTRIKNVEAIEGAIELAETTPNISQEEIAFVYQRLDEDGSSFKHEDAHKESLERTLISTETFRESLQNTILLATDDMDSKIIVLVAGVFPYMEIDISDTLLQYNQSLLMLYDMHYSSAFGGVSFLATTYGPFLDCKQNELKPPGAEPKKDGQGCHTLLFNVKLNINSSLWDTALRYIRLLFGFNLYSISLETTKRNWEEQIDNLHSLFDTKTKAVKIGNVLLEMLLSGSTDAAGEAFLERGLGTDGLDKIELFATKHMPEVCRIARGQLSTSARNLCFQRCEFSTSLSRYAKFIQLKDDDSFLYDEDPPAYLSESNIWLNTLEEKINILDMKTRHLGIQCLTMMQELGHLVKWISMTKPFAKTMKVNALMKIKRMNIAKILLYIVRNFIPDPEAVKDIENRLFNLKELVSKQKKKDLEDKFDEVEYLYRLERIAEVERKKLIETFHEKFRFADLDDDDLTPLLFQELDHPIDIFTDSMMEQNDSSPFLEEDEGEPEQEEQKPDEEPEPEGEPQPACDLDRVGSFFEKELSQKALEVLPKCDETFDCVLNERGSRMNSIEIQKMGILRVLEDLAATLSSPQKIHCDKAGNQKKLEVSFIYEITSTPTHQGYQDAKISSVTPSYYKRHPFNQLSGMGRSIQVSVLQKNEFSSIVIVPTSDVLPEDENEVNDHVEKLKRCYEFEKIDVTVDKSSAENRPPGETDAMEVDSNELRIDVDLGPVVPEYDTLIELSQVHPLHHGELVLLGKFTSAQEGTGVMSQMMRSISSYPHEIPEDKDVFAKNSSEDGSSEIPIETLIIHPTIQLAAYLHDDGSKITIGDMKPEVPPIADYEEKTVRKTFRDYQRRRERYREDMGVMNMNDVQYDVLVQEAMDSGRDLTDNGESDEDEEDDDI</sequence>
<organism>
    <name type="scientific">Caenorhabditis elegans</name>
    <dbReference type="NCBI Taxonomy" id="6239"/>
    <lineage>
        <taxon>Eukaryota</taxon>
        <taxon>Metazoa</taxon>
        <taxon>Ecdysozoa</taxon>
        <taxon>Nematoda</taxon>
        <taxon>Chromadorea</taxon>
        <taxon>Rhabditida</taxon>
        <taxon>Rhabditina</taxon>
        <taxon>Rhabditomorpha</taxon>
        <taxon>Rhabditoidea</taxon>
        <taxon>Rhabditidae</taxon>
        <taxon>Peloderinae</taxon>
        <taxon>Caenorhabditis</taxon>
    </lineage>
</organism>
<protein>
    <recommendedName>
        <fullName>Abnormal embryogenesis protein 30</fullName>
    </recommendedName>
</protein>